<accession>B2SXN2</accession>
<reference key="1">
    <citation type="journal article" date="2011" name="J. Bacteriol.">
        <title>Complete genome sequence of the plant growth-promoting endophyte Burkholderia phytofirmans strain PsJN.</title>
        <authorList>
            <person name="Weilharter A."/>
            <person name="Mitter B."/>
            <person name="Shin M.V."/>
            <person name="Chain P.S."/>
            <person name="Nowak J."/>
            <person name="Sessitsch A."/>
        </authorList>
    </citation>
    <scope>NUCLEOTIDE SEQUENCE [LARGE SCALE GENOMIC DNA]</scope>
    <source>
        <strain>DSM 17436 / LMG 22146 / PsJN</strain>
    </source>
</reference>
<protein>
    <recommendedName>
        <fullName>Putative 4-hydroxy-4-methyl-2-oxoglutarate aldolase</fullName>
        <shortName>HMG aldolase</shortName>
        <ecNumber>4.1.3.17</ecNumber>
    </recommendedName>
    <alternativeName>
        <fullName>Oxaloacetate decarboxylase</fullName>
        <shortName>OAA decarboxylase</shortName>
        <ecNumber>4.1.1.112</ecNumber>
    </alternativeName>
    <alternativeName>
        <fullName>Regulator of ribonuclease activity homolog</fullName>
    </alternativeName>
    <alternativeName>
        <fullName>RraA-like protein</fullName>
    </alternativeName>
</protein>
<keyword id="KW-0456">Lyase</keyword>
<keyword id="KW-0479">Metal-binding</keyword>
<evidence type="ECO:0000250" key="1"/>
<evidence type="ECO:0000305" key="2"/>
<proteinExistence type="inferred from homology"/>
<comment type="function">
    <text evidence="1">Catalyzes the aldol cleavage of 4-hydroxy-4-methyl-2-oxoglutarate (HMG) into 2 molecules of pyruvate. Also contains a secondary oxaloacetate (OAA) decarboxylase activity due to the common pyruvate enolate transition state formed following C-C bond cleavage in the retro-aldol and decarboxylation reactions (By similarity).</text>
</comment>
<comment type="catalytic activity">
    <reaction>
        <text>4-hydroxy-4-methyl-2-oxoglutarate = 2 pyruvate</text>
        <dbReference type="Rhea" id="RHEA:22748"/>
        <dbReference type="ChEBI" id="CHEBI:15361"/>
        <dbReference type="ChEBI" id="CHEBI:58276"/>
        <dbReference type="EC" id="4.1.3.17"/>
    </reaction>
</comment>
<comment type="catalytic activity">
    <reaction>
        <text>oxaloacetate + H(+) = pyruvate + CO2</text>
        <dbReference type="Rhea" id="RHEA:15641"/>
        <dbReference type="ChEBI" id="CHEBI:15361"/>
        <dbReference type="ChEBI" id="CHEBI:15378"/>
        <dbReference type="ChEBI" id="CHEBI:16452"/>
        <dbReference type="ChEBI" id="CHEBI:16526"/>
        <dbReference type="EC" id="4.1.1.112"/>
    </reaction>
</comment>
<comment type="cofactor">
    <cofactor evidence="1">
        <name>a divalent metal cation</name>
        <dbReference type="ChEBI" id="CHEBI:60240"/>
    </cofactor>
    <text evidence="1">Divalent metal cation.</text>
</comment>
<comment type="subunit">
    <text evidence="1">Homotrimer.</text>
</comment>
<comment type="similarity">
    <text evidence="2">Belongs to the class II aldolase/RraA-like family.</text>
</comment>
<sequence>MSFATADLCDAHEDQLALGTLRVLEPVFHLFSRAECFSGEAVTLKVFEDNALVRATLEEKGAGRVLVIDGGGSLRCALVGGNLAQLAEQNGWAGIVLNGCVRDALELNEVNVGIAALTTSPRRGQKLGTGERDVAVHLPGALVRPGEWVYADIDGVLVASAALN</sequence>
<feature type="chain" id="PRO_1000125596" description="Putative 4-hydroxy-4-methyl-2-oxoglutarate aldolase">
    <location>
        <begin position="1"/>
        <end position="164"/>
    </location>
</feature>
<feature type="binding site" evidence="1">
    <location>
        <begin position="80"/>
        <end position="83"/>
    </location>
    <ligand>
        <name>substrate</name>
    </ligand>
</feature>
<feature type="binding site" evidence="1">
    <location>
        <position position="102"/>
    </location>
    <ligand>
        <name>substrate</name>
    </ligand>
</feature>
<feature type="binding site" evidence="1">
    <location>
        <position position="103"/>
    </location>
    <ligand>
        <name>a divalent metal cation</name>
        <dbReference type="ChEBI" id="CHEBI:60240"/>
    </ligand>
</feature>
<organism>
    <name type="scientific">Paraburkholderia phytofirmans (strain DSM 17436 / LMG 22146 / PsJN)</name>
    <name type="common">Burkholderia phytofirmans</name>
    <dbReference type="NCBI Taxonomy" id="398527"/>
    <lineage>
        <taxon>Bacteria</taxon>
        <taxon>Pseudomonadati</taxon>
        <taxon>Pseudomonadota</taxon>
        <taxon>Betaproteobacteria</taxon>
        <taxon>Burkholderiales</taxon>
        <taxon>Burkholderiaceae</taxon>
        <taxon>Paraburkholderia</taxon>
    </lineage>
</organism>
<name>RRAAH_PARPJ</name>
<dbReference type="EC" id="4.1.3.17"/>
<dbReference type="EC" id="4.1.1.112"/>
<dbReference type="EMBL" id="CP001052">
    <property type="protein sequence ID" value="ACD16888.1"/>
    <property type="molecule type" value="Genomic_DNA"/>
</dbReference>
<dbReference type="RefSeq" id="WP_012433485.1">
    <property type="nucleotide sequence ID" value="NC_010681.1"/>
</dbReference>
<dbReference type="SMR" id="B2SXN2"/>
<dbReference type="STRING" id="398527.Bphyt_2492"/>
<dbReference type="KEGG" id="bpy:Bphyt_2492"/>
<dbReference type="eggNOG" id="COG0684">
    <property type="taxonomic scope" value="Bacteria"/>
</dbReference>
<dbReference type="HOGENOM" id="CLU_072626_4_0_4"/>
<dbReference type="OrthoDB" id="943692at2"/>
<dbReference type="Proteomes" id="UP000001739">
    <property type="component" value="Chromosome 1"/>
</dbReference>
<dbReference type="GO" id="GO:0047443">
    <property type="term" value="F:4-hydroxy-4-methyl-2-oxoglutarate aldolase activity"/>
    <property type="evidence" value="ECO:0007669"/>
    <property type="project" value="UniProtKB-EC"/>
</dbReference>
<dbReference type="GO" id="GO:0046872">
    <property type="term" value="F:metal ion binding"/>
    <property type="evidence" value="ECO:0007669"/>
    <property type="project" value="UniProtKB-KW"/>
</dbReference>
<dbReference type="GO" id="GO:0008948">
    <property type="term" value="F:oxaloacetate decarboxylase activity"/>
    <property type="evidence" value="ECO:0007669"/>
    <property type="project" value="UniProtKB-EC"/>
</dbReference>
<dbReference type="GO" id="GO:0008428">
    <property type="term" value="F:ribonuclease inhibitor activity"/>
    <property type="evidence" value="ECO:0007669"/>
    <property type="project" value="InterPro"/>
</dbReference>
<dbReference type="GO" id="GO:0051252">
    <property type="term" value="P:regulation of RNA metabolic process"/>
    <property type="evidence" value="ECO:0007669"/>
    <property type="project" value="InterPro"/>
</dbReference>
<dbReference type="CDD" id="cd16841">
    <property type="entry name" value="RraA_family"/>
    <property type="match status" value="1"/>
</dbReference>
<dbReference type="Gene3D" id="3.50.30.40">
    <property type="entry name" value="Ribonuclease E inhibitor RraA/RraA-like"/>
    <property type="match status" value="1"/>
</dbReference>
<dbReference type="InterPro" id="IPR010203">
    <property type="entry name" value="RraA"/>
</dbReference>
<dbReference type="InterPro" id="IPR005493">
    <property type="entry name" value="RraA/RraA-like"/>
</dbReference>
<dbReference type="InterPro" id="IPR036704">
    <property type="entry name" value="RraA/RraA-like_sf"/>
</dbReference>
<dbReference type="NCBIfam" id="TIGR01935">
    <property type="entry name" value="NOT-MenG"/>
    <property type="match status" value="1"/>
</dbReference>
<dbReference type="NCBIfam" id="NF006875">
    <property type="entry name" value="PRK09372.1"/>
    <property type="match status" value="1"/>
</dbReference>
<dbReference type="PANTHER" id="PTHR33254">
    <property type="entry name" value="4-HYDROXY-4-METHYL-2-OXOGLUTARATE ALDOLASE 3-RELATED"/>
    <property type="match status" value="1"/>
</dbReference>
<dbReference type="PANTHER" id="PTHR33254:SF4">
    <property type="entry name" value="4-HYDROXY-4-METHYL-2-OXOGLUTARATE ALDOLASE 3-RELATED"/>
    <property type="match status" value="1"/>
</dbReference>
<dbReference type="Pfam" id="PF03737">
    <property type="entry name" value="RraA-like"/>
    <property type="match status" value="1"/>
</dbReference>
<dbReference type="SUPFAM" id="SSF89562">
    <property type="entry name" value="RraA-like"/>
    <property type="match status" value="1"/>
</dbReference>
<gene>
    <name type="ordered locus">Bphyt_2492</name>
</gene>